<organism>
    <name type="scientific">Corynebacterium jeikeium (strain K411)</name>
    <dbReference type="NCBI Taxonomy" id="306537"/>
    <lineage>
        <taxon>Bacteria</taxon>
        <taxon>Bacillati</taxon>
        <taxon>Actinomycetota</taxon>
        <taxon>Actinomycetes</taxon>
        <taxon>Mycobacteriales</taxon>
        <taxon>Corynebacteriaceae</taxon>
        <taxon>Corynebacterium</taxon>
    </lineage>
</organism>
<evidence type="ECO:0000255" key="1">
    <source>
        <dbReference type="HAMAP-Rule" id="MF_00624"/>
    </source>
</evidence>
<comment type="function">
    <text evidence="1">Involved in the biosynthesis of ADP-glucose, a building block required for the elongation reactions to produce glycogen. Catalyzes the reaction between ATP and alpha-D-glucose 1-phosphate (G1P) to produce pyrophosphate and ADP-Glc.</text>
</comment>
<comment type="catalytic activity">
    <reaction evidence="1">
        <text>alpha-D-glucose 1-phosphate + ATP + H(+) = ADP-alpha-D-glucose + diphosphate</text>
        <dbReference type="Rhea" id="RHEA:12120"/>
        <dbReference type="ChEBI" id="CHEBI:15378"/>
        <dbReference type="ChEBI" id="CHEBI:30616"/>
        <dbReference type="ChEBI" id="CHEBI:33019"/>
        <dbReference type="ChEBI" id="CHEBI:57498"/>
        <dbReference type="ChEBI" id="CHEBI:58601"/>
        <dbReference type="EC" id="2.7.7.27"/>
    </reaction>
</comment>
<comment type="pathway">
    <text evidence="1">Glycan biosynthesis; glycogen biosynthesis.</text>
</comment>
<comment type="subunit">
    <text evidence="1">Homotetramer.</text>
</comment>
<comment type="similarity">
    <text evidence="1">Belongs to the bacterial/plant glucose-1-phosphate adenylyltransferase family.</text>
</comment>
<gene>
    <name evidence="1" type="primary">glgC</name>
    <name type="ordered locus">jk1383</name>
</gene>
<name>GLGC_CORJK</name>
<proteinExistence type="inferred from homology"/>
<sequence length="405" mass="44336">MKSRSNVLSIVLAGGEGKRLYPFTADRAKPAVPFGGNYRLIDFVLSNLVNAGYYKICVLTQYKSHSLDRHISQSWQLSGLTGQYITPVPAQQRLGKRWFTGSADAILQSLNLVYDEQPDYIIVFGADHVYRMDPEQMVQEHIKAGAGVTVAGLRVPRHEATAFGVIQADDDNKIEQFLEKPAEPPSVPDDPEVSFASMGNYVFTAQTLIDALKEDSEDENSNHDMGGDIIPRLVDRGEAYVYDFSNNYVPGETERDKGYWRDVGTVDAFYEAHMDLISVHPVFNLYNQQWPIHTAETGNLPPAKFVKGGIAQSSMVSAGCIISAGTVRNSVLSENVVVEEGASVEGCVIMPGVRIGRGAVVRHAIIDKNVQVSAGEIIGVDRARDQDRFTISKGGVVCIGKNVVV</sequence>
<dbReference type="EC" id="2.7.7.27" evidence="1"/>
<dbReference type="EMBL" id="CR931997">
    <property type="protein sequence ID" value="CAI37556.1"/>
    <property type="molecule type" value="Genomic_DNA"/>
</dbReference>
<dbReference type="RefSeq" id="WP_005293089.1">
    <property type="nucleotide sequence ID" value="NC_007164.1"/>
</dbReference>
<dbReference type="SMR" id="Q4JUF1"/>
<dbReference type="STRING" id="306537.jk1383"/>
<dbReference type="GeneID" id="92738963"/>
<dbReference type="KEGG" id="cjk:jk1383"/>
<dbReference type="eggNOG" id="COG0448">
    <property type="taxonomic scope" value="Bacteria"/>
</dbReference>
<dbReference type="HOGENOM" id="CLU_029499_14_1_11"/>
<dbReference type="OrthoDB" id="9801810at2"/>
<dbReference type="UniPathway" id="UPA00164"/>
<dbReference type="Proteomes" id="UP000000545">
    <property type="component" value="Chromosome"/>
</dbReference>
<dbReference type="GO" id="GO:0005524">
    <property type="term" value="F:ATP binding"/>
    <property type="evidence" value="ECO:0007669"/>
    <property type="project" value="UniProtKB-KW"/>
</dbReference>
<dbReference type="GO" id="GO:0008878">
    <property type="term" value="F:glucose-1-phosphate adenylyltransferase activity"/>
    <property type="evidence" value="ECO:0007669"/>
    <property type="project" value="UniProtKB-UniRule"/>
</dbReference>
<dbReference type="GO" id="GO:0005978">
    <property type="term" value="P:glycogen biosynthetic process"/>
    <property type="evidence" value="ECO:0007669"/>
    <property type="project" value="UniProtKB-UniRule"/>
</dbReference>
<dbReference type="CDD" id="cd02508">
    <property type="entry name" value="ADP_Glucose_PP"/>
    <property type="match status" value="1"/>
</dbReference>
<dbReference type="CDD" id="cd04651">
    <property type="entry name" value="LbH_G1P_AT_C"/>
    <property type="match status" value="1"/>
</dbReference>
<dbReference type="FunFam" id="3.90.550.10:FF:000014">
    <property type="entry name" value="Glucose-1-phosphate adenylyltransferase"/>
    <property type="match status" value="1"/>
</dbReference>
<dbReference type="Gene3D" id="2.160.10.10">
    <property type="entry name" value="Hexapeptide repeat proteins"/>
    <property type="match status" value="1"/>
</dbReference>
<dbReference type="Gene3D" id="3.90.550.10">
    <property type="entry name" value="Spore Coat Polysaccharide Biosynthesis Protein SpsA, Chain A"/>
    <property type="match status" value="1"/>
</dbReference>
<dbReference type="HAMAP" id="MF_00624">
    <property type="entry name" value="GlgC"/>
    <property type="match status" value="1"/>
</dbReference>
<dbReference type="InterPro" id="IPR011831">
    <property type="entry name" value="ADP-Glc_PPase"/>
</dbReference>
<dbReference type="InterPro" id="IPR005836">
    <property type="entry name" value="ADP_Glu_pyroP_CS"/>
</dbReference>
<dbReference type="InterPro" id="IPR023049">
    <property type="entry name" value="GlgC_bac"/>
</dbReference>
<dbReference type="InterPro" id="IPR056818">
    <property type="entry name" value="GlmU/GlgC-like_hexapep"/>
</dbReference>
<dbReference type="InterPro" id="IPR005835">
    <property type="entry name" value="NTP_transferase_dom"/>
</dbReference>
<dbReference type="InterPro" id="IPR029044">
    <property type="entry name" value="Nucleotide-diphossugar_trans"/>
</dbReference>
<dbReference type="InterPro" id="IPR011004">
    <property type="entry name" value="Trimer_LpxA-like_sf"/>
</dbReference>
<dbReference type="NCBIfam" id="TIGR02091">
    <property type="entry name" value="glgC"/>
    <property type="match status" value="1"/>
</dbReference>
<dbReference type="NCBIfam" id="NF001947">
    <property type="entry name" value="PRK00725.1"/>
    <property type="match status" value="1"/>
</dbReference>
<dbReference type="NCBIfam" id="NF002023">
    <property type="entry name" value="PRK00844.1"/>
    <property type="match status" value="1"/>
</dbReference>
<dbReference type="PANTHER" id="PTHR43523:SF2">
    <property type="entry name" value="GLUCOSE-1-PHOSPHATE ADENYLYLTRANSFERASE"/>
    <property type="match status" value="1"/>
</dbReference>
<dbReference type="PANTHER" id="PTHR43523">
    <property type="entry name" value="GLUCOSE-1-PHOSPHATE ADENYLYLTRANSFERASE-RELATED"/>
    <property type="match status" value="1"/>
</dbReference>
<dbReference type="Pfam" id="PF24894">
    <property type="entry name" value="Hexapep_GlmU"/>
    <property type="match status" value="1"/>
</dbReference>
<dbReference type="Pfam" id="PF00483">
    <property type="entry name" value="NTP_transferase"/>
    <property type="match status" value="1"/>
</dbReference>
<dbReference type="SUPFAM" id="SSF53448">
    <property type="entry name" value="Nucleotide-diphospho-sugar transferases"/>
    <property type="match status" value="1"/>
</dbReference>
<dbReference type="SUPFAM" id="SSF51161">
    <property type="entry name" value="Trimeric LpxA-like enzymes"/>
    <property type="match status" value="1"/>
</dbReference>
<dbReference type="PROSITE" id="PS00809">
    <property type="entry name" value="ADP_GLC_PYROPHOSPH_2"/>
    <property type="match status" value="1"/>
</dbReference>
<dbReference type="PROSITE" id="PS00810">
    <property type="entry name" value="ADP_GLC_PYROPHOSPH_3"/>
    <property type="match status" value="1"/>
</dbReference>
<protein>
    <recommendedName>
        <fullName evidence="1">Glucose-1-phosphate adenylyltransferase</fullName>
        <ecNumber evidence="1">2.7.7.27</ecNumber>
    </recommendedName>
    <alternativeName>
        <fullName evidence="1">ADP-glucose pyrophosphorylase</fullName>
        <shortName evidence="1">ADPGlc PPase</shortName>
    </alternativeName>
    <alternativeName>
        <fullName evidence="1">ADP-glucose synthase</fullName>
    </alternativeName>
</protein>
<reference key="1">
    <citation type="journal article" date="2005" name="J. Bacteriol.">
        <title>Complete genome sequence and analysis of the multiresistant nosocomial pathogen Corynebacterium jeikeium K411, a lipid-requiring bacterium of the human skin flora.</title>
        <authorList>
            <person name="Tauch A."/>
            <person name="Kaiser O."/>
            <person name="Hain T."/>
            <person name="Goesmann A."/>
            <person name="Weisshaar B."/>
            <person name="Albersmeier A."/>
            <person name="Bekel T."/>
            <person name="Bischoff N."/>
            <person name="Brune I."/>
            <person name="Chakraborty T."/>
            <person name="Kalinowski J."/>
            <person name="Meyer F."/>
            <person name="Rupp O."/>
            <person name="Schneiker S."/>
            <person name="Viehoever P."/>
            <person name="Puehler A."/>
        </authorList>
    </citation>
    <scope>NUCLEOTIDE SEQUENCE [LARGE SCALE GENOMIC DNA]</scope>
    <source>
        <strain>K411</strain>
    </source>
</reference>
<feature type="chain" id="PRO_0000261863" description="Glucose-1-phosphate adenylyltransferase">
    <location>
        <begin position="1"/>
        <end position="405"/>
    </location>
</feature>
<feature type="binding site" evidence="1">
    <location>
        <position position="164"/>
    </location>
    <ligand>
        <name>alpha-D-glucose 1-phosphate</name>
        <dbReference type="ChEBI" id="CHEBI:58601"/>
    </ligand>
</feature>
<feature type="binding site" evidence="1">
    <location>
        <begin position="179"/>
        <end position="180"/>
    </location>
    <ligand>
        <name>alpha-D-glucose 1-phosphate</name>
        <dbReference type="ChEBI" id="CHEBI:58601"/>
    </ligand>
</feature>
<feature type="binding site" evidence="1">
    <location>
        <position position="197"/>
    </location>
    <ligand>
        <name>alpha-D-glucose 1-phosphate</name>
        <dbReference type="ChEBI" id="CHEBI:58601"/>
    </ligand>
</feature>
<keyword id="KW-0067">ATP-binding</keyword>
<keyword id="KW-0119">Carbohydrate metabolism</keyword>
<keyword id="KW-0320">Glycogen biosynthesis</keyword>
<keyword id="KW-0321">Glycogen metabolism</keyword>
<keyword id="KW-0547">Nucleotide-binding</keyword>
<keyword id="KW-0548">Nucleotidyltransferase</keyword>
<keyword id="KW-1185">Reference proteome</keyword>
<keyword id="KW-0808">Transferase</keyword>
<accession>Q4JUF1</accession>